<protein>
    <recommendedName>
        <fullName evidence="1">Small ribosomal subunit protein uS2</fullName>
    </recommendedName>
    <alternativeName>
        <fullName evidence="3">30S ribosomal protein S2</fullName>
    </alternativeName>
</protein>
<dbReference type="EMBL" id="CP001213">
    <property type="protein sequence ID" value="ACL29582.1"/>
    <property type="molecule type" value="Genomic_DNA"/>
</dbReference>
<dbReference type="RefSeq" id="WP_004218012.1">
    <property type="nucleotide sequence ID" value="NC_011835.1"/>
</dbReference>
<dbReference type="SMR" id="B8DUA3"/>
<dbReference type="STRING" id="442563.BLA_1295"/>
<dbReference type="GeneID" id="29695196"/>
<dbReference type="KEGG" id="bla:BLA_1295"/>
<dbReference type="HOGENOM" id="CLU_040318_2_3_11"/>
<dbReference type="Proteomes" id="UP000002456">
    <property type="component" value="Chromosome"/>
</dbReference>
<dbReference type="GO" id="GO:0022627">
    <property type="term" value="C:cytosolic small ribosomal subunit"/>
    <property type="evidence" value="ECO:0007669"/>
    <property type="project" value="TreeGrafter"/>
</dbReference>
<dbReference type="GO" id="GO:0003735">
    <property type="term" value="F:structural constituent of ribosome"/>
    <property type="evidence" value="ECO:0007669"/>
    <property type="project" value="InterPro"/>
</dbReference>
<dbReference type="GO" id="GO:0006412">
    <property type="term" value="P:translation"/>
    <property type="evidence" value="ECO:0007669"/>
    <property type="project" value="UniProtKB-UniRule"/>
</dbReference>
<dbReference type="CDD" id="cd01425">
    <property type="entry name" value="RPS2"/>
    <property type="match status" value="1"/>
</dbReference>
<dbReference type="FunFam" id="1.10.287.610:FF:000001">
    <property type="entry name" value="30S ribosomal protein S2"/>
    <property type="match status" value="1"/>
</dbReference>
<dbReference type="Gene3D" id="3.40.50.10490">
    <property type="entry name" value="Glucose-6-phosphate isomerase like protein, domain 1"/>
    <property type="match status" value="1"/>
</dbReference>
<dbReference type="Gene3D" id="1.10.287.610">
    <property type="entry name" value="Helix hairpin bin"/>
    <property type="match status" value="1"/>
</dbReference>
<dbReference type="HAMAP" id="MF_00291_B">
    <property type="entry name" value="Ribosomal_uS2_B"/>
    <property type="match status" value="1"/>
</dbReference>
<dbReference type="InterPro" id="IPR001865">
    <property type="entry name" value="Ribosomal_uS2"/>
</dbReference>
<dbReference type="InterPro" id="IPR005706">
    <property type="entry name" value="Ribosomal_uS2_bac/mit/plastid"/>
</dbReference>
<dbReference type="InterPro" id="IPR018130">
    <property type="entry name" value="Ribosomal_uS2_CS"/>
</dbReference>
<dbReference type="InterPro" id="IPR023591">
    <property type="entry name" value="Ribosomal_uS2_flav_dom_sf"/>
</dbReference>
<dbReference type="NCBIfam" id="TIGR01011">
    <property type="entry name" value="rpsB_bact"/>
    <property type="match status" value="1"/>
</dbReference>
<dbReference type="PANTHER" id="PTHR12534">
    <property type="entry name" value="30S RIBOSOMAL PROTEIN S2 PROKARYOTIC AND ORGANELLAR"/>
    <property type="match status" value="1"/>
</dbReference>
<dbReference type="PANTHER" id="PTHR12534:SF0">
    <property type="entry name" value="SMALL RIBOSOMAL SUBUNIT PROTEIN US2M"/>
    <property type="match status" value="1"/>
</dbReference>
<dbReference type="Pfam" id="PF00318">
    <property type="entry name" value="Ribosomal_S2"/>
    <property type="match status" value="1"/>
</dbReference>
<dbReference type="PRINTS" id="PR00395">
    <property type="entry name" value="RIBOSOMALS2"/>
</dbReference>
<dbReference type="SUPFAM" id="SSF52313">
    <property type="entry name" value="Ribosomal protein S2"/>
    <property type="match status" value="1"/>
</dbReference>
<dbReference type="PROSITE" id="PS00963">
    <property type="entry name" value="RIBOSOMAL_S2_2"/>
    <property type="match status" value="1"/>
</dbReference>
<feature type="chain" id="PRO_1000194319" description="Small ribosomal subunit protein uS2">
    <location>
        <begin position="1"/>
        <end position="303"/>
    </location>
</feature>
<feature type="region of interest" description="Disordered" evidence="2">
    <location>
        <begin position="258"/>
        <end position="303"/>
    </location>
</feature>
<feature type="compositionally biased region" description="Basic and acidic residues" evidence="2">
    <location>
        <begin position="294"/>
        <end position="303"/>
    </location>
</feature>
<evidence type="ECO:0000255" key="1">
    <source>
        <dbReference type="HAMAP-Rule" id="MF_00291"/>
    </source>
</evidence>
<evidence type="ECO:0000256" key="2">
    <source>
        <dbReference type="SAM" id="MobiDB-lite"/>
    </source>
</evidence>
<evidence type="ECO:0000305" key="3"/>
<reference key="1">
    <citation type="journal article" date="2009" name="J. Bacteriol.">
        <title>Genome sequence of the probiotic bacterium Bifidobacterium animalis subsp. lactis AD011.</title>
        <authorList>
            <person name="Kim J.F."/>
            <person name="Jeong H."/>
            <person name="Yu D.S."/>
            <person name="Choi S.-H."/>
            <person name="Hur C.-G."/>
            <person name="Park M.-S."/>
            <person name="Yoon S.H."/>
            <person name="Kim D.-W."/>
            <person name="Ji G.E."/>
            <person name="Park H.-S."/>
            <person name="Oh T.K."/>
        </authorList>
    </citation>
    <scope>NUCLEOTIDE SEQUENCE [LARGE SCALE GENOMIC DNA]</scope>
    <source>
        <strain>AD011</strain>
    </source>
</reference>
<organism>
    <name type="scientific">Bifidobacterium animalis subsp. lactis (strain AD011)</name>
    <dbReference type="NCBI Taxonomy" id="442563"/>
    <lineage>
        <taxon>Bacteria</taxon>
        <taxon>Bacillati</taxon>
        <taxon>Actinomycetota</taxon>
        <taxon>Actinomycetes</taxon>
        <taxon>Bifidobacteriales</taxon>
        <taxon>Bifidobacteriaceae</taxon>
        <taxon>Bifidobacterium</taxon>
    </lineage>
</organism>
<sequence length="303" mass="33776">MAQITMSEMLKAGLQFGHQTRRWNPKMKQYILTERNGIYIINLFKTLDLIDVAYDFIKTTVAHNGTVLFVGTKKQAQEAIKNAATRVNMPYVSERWLGGMLTNFQTVSKRVNRLKELETMDFDDVHGSGLTKKELLLLKREKDKLERQLGGIRNMTRTPSAMFVVDINKEALAVEEAHKLGIPVVAIVDTNADPEAVEYPIPANDDAIRGIELLTNLFADAVAEGLLERSGNASKSESNSEQPMAAWEKELLEKNEKATLRENAVVTENEVKKTDEEEGASSEAARADAQNEEAVAKPGEEVE</sequence>
<keyword id="KW-1185">Reference proteome</keyword>
<keyword id="KW-0687">Ribonucleoprotein</keyword>
<keyword id="KW-0689">Ribosomal protein</keyword>
<gene>
    <name evidence="1" type="primary">rpsB</name>
    <name type="ordered locus">BLA_1295</name>
</gene>
<comment type="similarity">
    <text evidence="1">Belongs to the universal ribosomal protein uS2 family.</text>
</comment>
<proteinExistence type="inferred from homology"/>
<name>RS2_BIFA0</name>
<accession>B8DUA3</accession>